<name>Y142_UREPA</name>
<dbReference type="EMBL" id="AF222894">
    <property type="protein sequence ID" value="AAF30548.1"/>
    <property type="molecule type" value="Genomic_DNA"/>
</dbReference>
<dbReference type="RefSeq" id="WP_006688941.1">
    <property type="nucleotide sequence ID" value="NC_002162.1"/>
</dbReference>
<dbReference type="SMR" id="Q9PR02"/>
<dbReference type="STRING" id="273119.UU142"/>
<dbReference type="EnsemblBacteria" id="AAF30548">
    <property type="protein sequence ID" value="AAF30548"/>
    <property type="gene ID" value="UU142"/>
</dbReference>
<dbReference type="GeneID" id="29672731"/>
<dbReference type="KEGG" id="uur:UU142"/>
<dbReference type="eggNOG" id="COG2739">
    <property type="taxonomic scope" value="Bacteria"/>
</dbReference>
<dbReference type="HOGENOM" id="CLU_129218_1_2_14"/>
<dbReference type="OrthoDB" id="404035at2"/>
<dbReference type="Proteomes" id="UP000000423">
    <property type="component" value="Chromosome"/>
</dbReference>
<dbReference type="Gene3D" id="1.10.10.10">
    <property type="entry name" value="Winged helix-like DNA-binding domain superfamily/Winged helix DNA-binding domain"/>
    <property type="match status" value="1"/>
</dbReference>
<dbReference type="HAMAP" id="MF_00245">
    <property type="entry name" value="UPF0122"/>
    <property type="match status" value="1"/>
</dbReference>
<dbReference type="InterPro" id="IPR013324">
    <property type="entry name" value="RNA_pol_sigma_r3/r4-like"/>
</dbReference>
<dbReference type="InterPro" id="IPR007394">
    <property type="entry name" value="UPF0122"/>
</dbReference>
<dbReference type="InterPro" id="IPR036388">
    <property type="entry name" value="WH-like_DNA-bd_sf"/>
</dbReference>
<dbReference type="NCBIfam" id="NF001073">
    <property type="entry name" value="PRK00118.2-3"/>
    <property type="match status" value="1"/>
</dbReference>
<dbReference type="PANTHER" id="PTHR40083">
    <property type="entry name" value="UPF0122 PROTEIN CBO2450/CLC_2298"/>
    <property type="match status" value="1"/>
</dbReference>
<dbReference type="PANTHER" id="PTHR40083:SF1">
    <property type="entry name" value="UPF0122 PROTEIN YLXM"/>
    <property type="match status" value="1"/>
</dbReference>
<dbReference type="Pfam" id="PF04297">
    <property type="entry name" value="UPF0122"/>
    <property type="match status" value="1"/>
</dbReference>
<dbReference type="SUPFAM" id="SSF88659">
    <property type="entry name" value="Sigma3 and sigma4 domains of RNA polymerase sigma factors"/>
    <property type="match status" value="1"/>
</dbReference>
<organism>
    <name type="scientific">Ureaplasma parvum serovar 3 (strain ATCC 700970)</name>
    <dbReference type="NCBI Taxonomy" id="273119"/>
    <lineage>
        <taxon>Bacteria</taxon>
        <taxon>Bacillati</taxon>
        <taxon>Mycoplasmatota</taxon>
        <taxon>Mycoplasmoidales</taxon>
        <taxon>Mycoplasmoidaceae</taxon>
        <taxon>Ureaplasma</taxon>
    </lineage>
</organism>
<accession>Q9PR02</accession>
<evidence type="ECO:0000250" key="1"/>
<evidence type="ECO:0000305" key="2"/>
<comment type="function">
    <text evidence="1">Might take part in the signal recognition particle (SRP) pathway. This is inferred from the conservation of its genetic proximity to ftsY/ffh. May be a regulatory protein (By similarity).</text>
</comment>
<comment type="similarity">
    <text evidence="2">Belongs to the UPF0122 family.</text>
</comment>
<sequence>MLNKNKRWYLIALYDIYQGLLTTKQCEYFNLHYFKDLSFSEIAELKEISKSAISDCLNKVCDQLLKYEQALLIYEKNKKRNDLYTLINDSELVKKLKDI</sequence>
<protein>
    <recommendedName>
        <fullName>UPF0122 protein UU142</fullName>
    </recommendedName>
</protein>
<gene>
    <name type="ordered locus">UU142</name>
</gene>
<reference key="1">
    <citation type="journal article" date="2000" name="Nature">
        <title>The complete sequence of the mucosal pathogen Ureaplasma urealyticum.</title>
        <authorList>
            <person name="Glass J.I."/>
            <person name="Lefkowitz E.J."/>
            <person name="Glass J.S."/>
            <person name="Heiner C.R."/>
            <person name="Chen E.Y."/>
            <person name="Cassell G.H."/>
        </authorList>
    </citation>
    <scope>NUCLEOTIDE SEQUENCE [LARGE SCALE GENOMIC DNA]</scope>
    <source>
        <strain>ATCC 700970</strain>
    </source>
</reference>
<proteinExistence type="inferred from homology"/>
<keyword id="KW-1185">Reference proteome</keyword>
<feature type="chain" id="PRO_0000211893" description="UPF0122 protein UU142">
    <location>
        <begin position="1"/>
        <end position="99"/>
    </location>
</feature>